<organism>
    <name type="scientific">Neosartorya fischeri (strain ATCC 1020 / DSM 3700 / CBS 544.65 / FGSC A1164 / JCM 1740 / NRRL 181 / WB 181)</name>
    <name type="common">Aspergillus fischerianus</name>
    <dbReference type="NCBI Taxonomy" id="331117"/>
    <lineage>
        <taxon>Eukaryota</taxon>
        <taxon>Fungi</taxon>
        <taxon>Dikarya</taxon>
        <taxon>Ascomycota</taxon>
        <taxon>Pezizomycotina</taxon>
        <taxon>Eurotiomycetes</taxon>
        <taxon>Eurotiomycetidae</taxon>
        <taxon>Eurotiales</taxon>
        <taxon>Aspergillaceae</taxon>
        <taxon>Aspergillus</taxon>
        <taxon>Aspergillus subgen. Fumigati</taxon>
    </lineage>
</organism>
<name>EGLB_NEOFI</name>
<keyword id="KW-0119">Carbohydrate metabolism</keyword>
<keyword id="KW-0136">Cellulose degradation</keyword>
<keyword id="KW-0325">Glycoprotein</keyword>
<keyword id="KW-0326">Glycosidase</keyword>
<keyword id="KW-0378">Hydrolase</keyword>
<keyword id="KW-0624">Polysaccharide degradation</keyword>
<keyword id="KW-1185">Reference proteome</keyword>
<keyword id="KW-0964">Secreted</keyword>
<keyword id="KW-0732">Signal</keyword>
<dbReference type="EC" id="3.2.1.4"/>
<dbReference type="EMBL" id="DS027698">
    <property type="protein sequence ID" value="EAW15969.1"/>
    <property type="molecule type" value="Genomic_DNA"/>
</dbReference>
<dbReference type="RefSeq" id="XP_001257866.1">
    <property type="nucleotide sequence ID" value="XM_001257865.1"/>
</dbReference>
<dbReference type="SMR" id="A1DME8"/>
<dbReference type="STRING" id="331117.A1DME8"/>
<dbReference type="GlyCosmos" id="A1DME8">
    <property type="glycosylation" value="2 sites, No reported glycans"/>
</dbReference>
<dbReference type="EnsemblFungi" id="EAW15969">
    <property type="protein sequence ID" value="EAW15969"/>
    <property type="gene ID" value="NFIA_053150"/>
</dbReference>
<dbReference type="GeneID" id="4584381"/>
<dbReference type="KEGG" id="nfi:NFIA_053150"/>
<dbReference type="VEuPathDB" id="FungiDB:NFIA_053150"/>
<dbReference type="eggNOG" id="ENOG502QXN4">
    <property type="taxonomic scope" value="Eukaryota"/>
</dbReference>
<dbReference type="HOGENOM" id="CLU_029718_0_2_1"/>
<dbReference type="OMA" id="GKGMNIF"/>
<dbReference type="OrthoDB" id="5823761at2759"/>
<dbReference type="Proteomes" id="UP000006702">
    <property type="component" value="Unassembled WGS sequence"/>
</dbReference>
<dbReference type="GO" id="GO:0005576">
    <property type="term" value="C:extracellular region"/>
    <property type="evidence" value="ECO:0007669"/>
    <property type="project" value="UniProtKB-SubCell"/>
</dbReference>
<dbReference type="GO" id="GO:0008810">
    <property type="term" value="F:cellulase activity"/>
    <property type="evidence" value="ECO:0007669"/>
    <property type="project" value="UniProtKB-EC"/>
</dbReference>
<dbReference type="GO" id="GO:0030245">
    <property type="term" value="P:cellulose catabolic process"/>
    <property type="evidence" value="ECO:0007669"/>
    <property type="project" value="UniProtKB-KW"/>
</dbReference>
<dbReference type="FunFam" id="3.20.20.80:FF:000078">
    <property type="entry name" value="Endo-beta-1,4-glucanase B"/>
    <property type="match status" value="1"/>
</dbReference>
<dbReference type="Gene3D" id="3.20.20.80">
    <property type="entry name" value="Glycosidases"/>
    <property type="match status" value="1"/>
</dbReference>
<dbReference type="InterPro" id="IPR001547">
    <property type="entry name" value="Glyco_hydro_5"/>
</dbReference>
<dbReference type="InterPro" id="IPR017853">
    <property type="entry name" value="Glycoside_hydrolase_SF"/>
</dbReference>
<dbReference type="PANTHER" id="PTHR34142">
    <property type="entry name" value="ENDO-BETA-1,4-GLUCANASE A"/>
    <property type="match status" value="1"/>
</dbReference>
<dbReference type="PANTHER" id="PTHR34142:SF6">
    <property type="entry name" value="ENDO-BETA-1,4-GLUCANASE B"/>
    <property type="match status" value="1"/>
</dbReference>
<dbReference type="Pfam" id="PF00150">
    <property type="entry name" value="Cellulase"/>
    <property type="match status" value="1"/>
</dbReference>
<dbReference type="SUPFAM" id="SSF51445">
    <property type="entry name" value="(Trans)glycosidases"/>
    <property type="match status" value="1"/>
</dbReference>
<sequence length="329" mass="35875">MKFGSIVLIAAAAGSAVAAPAKRASVFQWFGSNESGAEFGQNTIPGSYGKEFIFPDPSTISTLIGKGMNIFRVQFLMERLVPSSMTGSYNEEYLANLTSVVDAVTKAGSYAILDPHNFGRYNGQIISSTDDFKTFWQNLAGKFKSNNLVIFDTNNEYHDMDQALVLNLNQAAINGIRAAGATSQYIFVEGNSWSGAWTWVDVNDNLKALTDPQDKIVYEMHQYLDSDGSGTSESCVSTTIGKERVTAATKWLKDNGKVGIIGEFAGGVNDQCRTAISGMLEYLAQNTDVWKGALWWAAGPWWGNYMFNMEPPSGAAYVGMLDILEPYLG</sequence>
<feature type="signal peptide" evidence="2">
    <location>
        <begin position="1"/>
        <end position="18"/>
    </location>
</feature>
<feature type="chain" id="PRO_0000394059" description="Probable endo-beta-1,4-glucanase B">
    <location>
        <begin position="19"/>
        <end position="329"/>
    </location>
</feature>
<feature type="active site" description="Proton donor" evidence="1">
    <location>
        <position position="156"/>
    </location>
</feature>
<feature type="active site" description="Nucleophile" evidence="1">
    <location>
        <position position="263"/>
    </location>
</feature>
<feature type="glycosylation site" description="N-linked (GlcNAc...) asparagine" evidence="2">
    <location>
        <position position="33"/>
    </location>
</feature>
<feature type="glycosylation site" description="N-linked (GlcNAc...) asparagine" evidence="2">
    <location>
        <position position="96"/>
    </location>
</feature>
<accession>A1DME8</accession>
<proteinExistence type="inferred from homology"/>
<reference key="1">
    <citation type="journal article" date="2008" name="PLoS Genet.">
        <title>Genomic islands in the pathogenic filamentous fungus Aspergillus fumigatus.</title>
        <authorList>
            <person name="Fedorova N.D."/>
            <person name="Khaldi N."/>
            <person name="Joardar V.S."/>
            <person name="Maiti R."/>
            <person name="Amedeo P."/>
            <person name="Anderson M.J."/>
            <person name="Crabtree J."/>
            <person name="Silva J.C."/>
            <person name="Badger J.H."/>
            <person name="Albarraq A."/>
            <person name="Angiuoli S."/>
            <person name="Bussey H."/>
            <person name="Bowyer P."/>
            <person name="Cotty P.J."/>
            <person name="Dyer P.S."/>
            <person name="Egan A."/>
            <person name="Galens K."/>
            <person name="Fraser-Liggett C.M."/>
            <person name="Haas B.J."/>
            <person name="Inman J.M."/>
            <person name="Kent R."/>
            <person name="Lemieux S."/>
            <person name="Malavazi I."/>
            <person name="Orvis J."/>
            <person name="Roemer T."/>
            <person name="Ronning C.M."/>
            <person name="Sundaram J.P."/>
            <person name="Sutton G."/>
            <person name="Turner G."/>
            <person name="Venter J.C."/>
            <person name="White O.R."/>
            <person name="Whitty B.R."/>
            <person name="Youngman P."/>
            <person name="Wolfe K.H."/>
            <person name="Goldman G.H."/>
            <person name="Wortman J.R."/>
            <person name="Jiang B."/>
            <person name="Denning D.W."/>
            <person name="Nierman W.C."/>
        </authorList>
    </citation>
    <scope>NUCLEOTIDE SEQUENCE [LARGE SCALE GENOMIC DNA]</scope>
    <source>
        <strain>ATCC 1020 / DSM 3700 / CBS 544.65 / FGSC A1164 / JCM 1740 / NRRL 181 / WB 181</strain>
    </source>
</reference>
<evidence type="ECO:0000250" key="1"/>
<evidence type="ECO:0000255" key="2"/>
<evidence type="ECO:0000305" key="3"/>
<gene>
    <name type="primary">eglB</name>
    <name type="ORF">NFIA_053150</name>
</gene>
<comment type="function">
    <text evidence="1">Has endoglucanase activity on substrates containing beta-1,4 glycosidic bonds, like in carboxymethylcellulose (CMC), hydroxyethylcellulose (HEC) and beta-glucan. Involved in the degradation of complex natural cellulosic substrates (By similarity).</text>
</comment>
<comment type="catalytic activity">
    <reaction>
        <text>Endohydrolysis of (1-&gt;4)-beta-D-glucosidic linkages in cellulose, lichenin and cereal beta-D-glucans.</text>
        <dbReference type="EC" id="3.2.1.4"/>
    </reaction>
</comment>
<comment type="subcellular location">
    <subcellularLocation>
        <location evidence="1">Secreted</location>
    </subcellularLocation>
</comment>
<comment type="similarity">
    <text evidence="3">Belongs to the glycosyl hydrolase 5 (cellulase A) family.</text>
</comment>
<protein>
    <recommendedName>
        <fullName>Probable endo-beta-1,4-glucanase B</fullName>
        <shortName>Endoglucanase B</shortName>
        <ecNumber>3.2.1.4</ecNumber>
    </recommendedName>
    <alternativeName>
        <fullName>Carboxymethylcellulase B</fullName>
    </alternativeName>
    <alternativeName>
        <fullName>Cellulase B</fullName>
    </alternativeName>
</protein>